<sequence length="426" mass="47088">MLDPALLRHQPADLAERLRTSRGFELDVSALESLEADRKRIQVRTQELQSLRNSRSKAIGQAKAKGEDVSAIMAEVAAFADELKASEVALDELREKIDAISMGIPNLPADDVPAGADENDNVEQARWGTARQFDFKVLDHVELGARNGWLDGETAAKLSGSRFTVLRGPIARLHRALAQFMVDLHTGEHGYEETNVPLLVNADSLRGTSQLPKFEDDLFKTAVGDSTRYLIPTSEVPLTNIVRDEIVDAERLPLRMTAHSMCFRAEAGSGGRDVRGMIRQHQFEKVELVSISRPEDSDAEHQRMTRCAEVVLEKLGLPYRKVLLCTGDMGFSAVKTYDLEVWLPSQETYREISSCSNCGDFQARRMQARWRNPATGKPELAHTLNGSGVAVGRAMIAVMENYQNADGSITVPEALRPYMGGLETIG</sequence>
<name>SYS_STRM5</name>
<feature type="chain" id="PRO_1000098128" description="Serine--tRNA ligase">
    <location>
        <begin position="1"/>
        <end position="426"/>
    </location>
</feature>
<feature type="binding site" evidence="1">
    <location>
        <begin position="233"/>
        <end position="235"/>
    </location>
    <ligand>
        <name>L-serine</name>
        <dbReference type="ChEBI" id="CHEBI:33384"/>
    </ligand>
</feature>
<feature type="binding site" evidence="1">
    <location>
        <begin position="264"/>
        <end position="266"/>
    </location>
    <ligand>
        <name>ATP</name>
        <dbReference type="ChEBI" id="CHEBI:30616"/>
    </ligand>
</feature>
<feature type="binding site" evidence="1">
    <location>
        <position position="287"/>
    </location>
    <ligand>
        <name>L-serine</name>
        <dbReference type="ChEBI" id="CHEBI:33384"/>
    </ligand>
</feature>
<feature type="binding site" evidence="1">
    <location>
        <begin position="351"/>
        <end position="354"/>
    </location>
    <ligand>
        <name>ATP</name>
        <dbReference type="ChEBI" id="CHEBI:30616"/>
    </ligand>
</feature>
<feature type="binding site" evidence="1">
    <location>
        <position position="387"/>
    </location>
    <ligand>
        <name>L-serine</name>
        <dbReference type="ChEBI" id="CHEBI:33384"/>
    </ligand>
</feature>
<proteinExistence type="inferred from homology"/>
<protein>
    <recommendedName>
        <fullName evidence="1">Serine--tRNA ligase</fullName>
        <ecNumber evidence="1">6.1.1.11</ecNumber>
    </recommendedName>
    <alternativeName>
        <fullName evidence="1">Seryl-tRNA synthetase</fullName>
        <shortName evidence="1">SerRS</shortName>
    </alternativeName>
    <alternativeName>
        <fullName evidence="1">Seryl-tRNA(Ser/Sec) synthetase</fullName>
    </alternativeName>
</protein>
<dbReference type="EC" id="6.1.1.11" evidence="1"/>
<dbReference type="EMBL" id="CP001111">
    <property type="protein sequence ID" value="ACF52235.1"/>
    <property type="molecule type" value="Genomic_DNA"/>
</dbReference>
<dbReference type="RefSeq" id="WP_006376047.1">
    <property type="nucleotide sequence ID" value="NC_011071.1"/>
</dbReference>
<dbReference type="SMR" id="B4SP40"/>
<dbReference type="STRING" id="391008.Smal_2535"/>
<dbReference type="KEGG" id="smt:Smal_2535"/>
<dbReference type="eggNOG" id="COG0172">
    <property type="taxonomic scope" value="Bacteria"/>
</dbReference>
<dbReference type="HOGENOM" id="CLU_023797_1_1_6"/>
<dbReference type="OrthoDB" id="9804647at2"/>
<dbReference type="UniPathway" id="UPA00906">
    <property type="reaction ID" value="UER00895"/>
</dbReference>
<dbReference type="Proteomes" id="UP000001867">
    <property type="component" value="Chromosome"/>
</dbReference>
<dbReference type="GO" id="GO:0005737">
    <property type="term" value="C:cytoplasm"/>
    <property type="evidence" value="ECO:0007669"/>
    <property type="project" value="UniProtKB-SubCell"/>
</dbReference>
<dbReference type="GO" id="GO:0005524">
    <property type="term" value="F:ATP binding"/>
    <property type="evidence" value="ECO:0007669"/>
    <property type="project" value="UniProtKB-UniRule"/>
</dbReference>
<dbReference type="GO" id="GO:0004828">
    <property type="term" value="F:serine-tRNA ligase activity"/>
    <property type="evidence" value="ECO:0007669"/>
    <property type="project" value="UniProtKB-UniRule"/>
</dbReference>
<dbReference type="GO" id="GO:0016260">
    <property type="term" value="P:selenocysteine biosynthetic process"/>
    <property type="evidence" value="ECO:0007669"/>
    <property type="project" value="UniProtKB-UniRule"/>
</dbReference>
<dbReference type="GO" id="GO:0006434">
    <property type="term" value="P:seryl-tRNA aminoacylation"/>
    <property type="evidence" value="ECO:0007669"/>
    <property type="project" value="UniProtKB-UniRule"/>
</dbReference>
<dbReference type="CDD" id="cd00770">
    <property type="entry name" value="SerRS_core"/>
    <property type="match status" value="1"/>
</dbReference>
<dbReference type="Gene3D" id="3.30.930.10">
    <property type="entry name" value="Bira Bifunctional Protein, Domain 2"/>
    <property type="match status" value="1"/>
</dbReference>
<dbReference type="Gene3D" id="1.10.287.40">
    <property type="entry name" value="Serine-tRNA synthetase, tRNA binding domain"/>
    <property type="match status" value="1"/>
</dbReference>
<dbReference type="HAMAP" id="MF_00176">
    <property type="entry name" value="Ser_tRNA_synth_type1"/>
    <property type="match status" value="1"/>
</dbReference>
<dbReference type="InterPro" id="IPR002314">
    <property type="entry name" value="aa-tRNA-synt_IIb"/>
</dbReference>
<dbReference type="InterPro" id="IPR006195">
    <property type="entry name" value="aa-tRNA-synth_II"/>
</dbReference>
<dbReference type="InterPro" id="IPR045864">
    <property type="entry name" value="aa-tRNA-synth_II/BPL/LPL"/>
</dbReference>
<dbReference type="InterPro" id="IPR002317">
    <property type="entry name" value="Ser-tRNA-ligase_type_1"/>
</dbReference>
<dbReference type="InterPro" id="IPR015866">
    <property type="entry name" value="Ser-tRNA-synth_1_N"/>
</dbReference>
<dbReference type="InterPro" id="IPR042103">
    <property type="entry name" value="SerRS_1_N_sf"/>
</dbReference>
<dbReference type="InterPro" id="IPR033729">
    <property type="entry name" value="SerRS_core"/>
</dbReference>
<dbReference type="InterPro" id="IPR010978">
    <property type="entry name" value="tRNA-bd_arm"/>
</dbReference>
<dbReference type="NCBIfam" id="TIGR00414">
    <property type="entry name" value="serS"/>
    <property type="match status" value="1"/>
</dbReference>
<dbReference type="PANTHER" id="PTHR43697:SF1">
    <property type="entry name" value="SERINE--TRNA LIGASE"/>
    <property type="match status" value="1"/>
</dbReference>
<dbReference type="PANTHER" id="PTHR43697">
    <property type="entry name" value="SERYL-TRNA SYNTHETASE"/>
    <property type="match status" value="1"/>
</dbReference>
<dbReference type="Pfam" id="PF02403">
    <property type="entry name" value="Seryl_tRNA_N"/>
    <property type="match status" value="1"/>
</dbReference>
<dbReference type="Pfam" id="PF00587">
    <property type="entry name" value="tRNA-synt_2b"/>
    <property type="match status" value="1"/>
</dbReference>
<dbReference type="PIRSF" id="PIRSF001529">
    <property type="entry name" value="Ser-tRNA-synth_IIa"/>
    <property type="match status" value="1"/>
</dbReference>
<dbReference type="PRINTS" id="PR00981">
    <property type="entry name" value="TRNASYNTHSER"/>
</dbReference>
<dbReference type="SUPFAM" id="SSF55681">
    <property type="entry name" value="Class II aaRS and biotin synthetases"/>
    <property type="match status" value="1"/>
</dbReference>
<dbReference type="SUPFAM" id="SSF46589">
    <property type="entry name" value="tRNA-binding arm"/>
    <property type="match status" value="1"/>
</dbReference>
<dbReference type="PROSITE" id="PS50862">
    <property type="entry name" value="AA_TRNA_LIGASE_II"/>
    <property type="match status" value="1"/>
</dbReference>
<reference key="1">
    <citation type="submission" date="2008-06" db="EMBL/GenBank/DDBJ databases">
        <title>Complete sequence of Stenotrophomonas maltophilia R551-3.</title>
        <authorList>
            <consortium name="US DOE Joint Genome Institute"/>
            <person name="Lucas S."/>
            <person name="Copeland A."/>
            <person name="Lapidus A."/>
            <person name="Glavina del Rio T."/>
            <person name="Dalin E."/>
            <person name="Tice H."/>
            <person name="Pitluck S."/>
            <person name="Chain P."/>
            <person name="Malfatti S."/>
            <person name="Shin M."/>
            <person name="Vergez L."/>
            <person name="Lang D."/>
            <person name="Schmutz J."/>
            <person name="Larimer F."/>
            <person name="Land M."/>
            <person name="Hauser L."/>
            <person name="Kyrpides N."/>
            <person name="Mikhailova N."/>
            <person name="Taghavi S."/>
            <person name="Monchy S."/>
            <person name="Newman L."/>
            <person name="Vangronsveld J."/>
            <person name="van der Lelie D."/>
            <person name="Richardson P."/>
        </authorList>
    </citation>
    <scope>NUCLEOTIDE SEQUENCE [LARGE SCALE GENOMIC DNA]</scope>
    <source>
        <strain>R551-3</strain>
    </source>
</reference>
<evidence type="ECO:0000255" key="1">
    <source>
        <dbReference type="HAMAP-Rule" id="MF_00176"/>
    </source>
</evidence>
<organism>
    <name type="scientific">Stenotrophomonas maltophilia (strain R551-3)</name>
    <dbReference type="NCBI Taxonomy" id="391008"/>
    <lineage>
        <taxon>Bacteria</taxon>
        <taxon>Pseudomonadati</taxon>
        <taxon>Pseudomonadota</taxon>
        <taxon>Gammaproteobacteria</taxon>
        <taxon>Lysobacterales</taxon>
        <taxon>Lysobacteraceae</taxon>
        <taxon>Stenotrophomonas</taxon>
        <taxon>Stenotrophomonas maltophilia group</taxon>
    </lineage>
</organism>
<comment type="function">
    <text evidence="1">Catalyzes the attachment of serine to tRNA(Ser). Is also able to aminoacylate tRNA(Sec) with serine, to form the misacylated tRNA L-seryl-tRNA(Sec), which will be further converted into selenocysteinyl-tRNA(Sec).</text>
</comment>
<comment type="catalytic activity">
    <reaction evidence="1">
        <text>tRNA(Ser) + L-serine + ATP = L-seryl-tRNA(Ser) + AMP + diphosphate + H(+)</text>
        <dbReference type="Rhea" id="RHEA:12292"/>
        <dbReference type="Rhea" id="RHEA-COMP:9669"/>
        <dbReference type="Rhea" id="RHEA-COMP:9703"/>
        <dbReference type="ChEBI" id="CHEBI:15378"/>
        <dbReference type="ChEBI" id="CHEBI:30616"/>
        <dbReference type="ChEBI" id="CHEBI:33019"/>
        <dbReference type="ChEBI" id="CHEBI:33384"/>
        <dbReference type="ChEBI" id="CHEBI:78442"/>
        <dbReference type="ChEBI" id="CHEBI:78533"/>
        <dbReference type="ChEBI" id="CHEBI:456215"/>
        <dbReference type="EC" id="6.1.1.11"/>
    </reaction>
</comment>
<comment type="catalytic activity">
    <reaction evidence="1">
        <text>tRNA(Sec) + L-serine + ATP = L-seryl-tRNA(Sec) + AMP + diphosphate + H(+)</text>
        <dbReference type="Rhea" id="RHEA:42580"/>
        <dbReference type="Rhea" id="RHEA-COMP:9742"/>
        <dbReference type="Rhea" id="RHEA-COMP:10128"/>
        <dbReference type="ChEBI" id="CHEBI:15378"/>
        <dbReference type="ChEBI" id="CHEBI:30616"/>
        <dbReference type="ChEBI" id="CHEBI:33019"/>
        <dbReference type="ChEBI" id="CHEBI:33384"/>
        <dbReference type="ChEBI" id="CHEBI:78442"/>
        <dbReference type="ChEBI" id="CHEBI:78533"/>
        <dbReference type="ChEBI" id="CHEBI:456215"/>
        <dbReference type="EC" id="6.1.1.11"/>
    </reaction>
</comment>
<comment type="pathway">
    <text evidence="1">Aminoacyl-tRNA biosynthesis; selenocysteinyl-tRNA(Sec) biosynthesis; L-seryl-tRNA(Sec) from L-serine and tRNA(Sec): step 1/1.</text>
</comment>
<comment type="subunit">
    <text evidence="1">Homodimer. The tRNA molecule binds across the dimer.</text>
</comment>
<comment type="subcellular location">
    <subcellularLocation>
        <location evidence="1">Cytoplasm</location>
    </subcellularLocation>
</comment>
<comment type="domain">
    <text evidence="1">Consists of two distinct domains, a catalytic core and a N-terminal extension that is involved in tRNA binding.</text>
</comment>
<comment type="similarity">
    <text evidence="1">Belongs to the class-II aminoacyl-tRNA synthetase family. Type-1 seryl-tRNA synthetase subfamily.</text>
</comment>
<keyword id="KW-0030">Aminoacyl-tRNA synthetase</keyword>
<keyword id="KW-0067">ATP-binding</keyword>
<keyword id="KW-0963">Cytoplasm</keyword>
<keyword id="KW-0436">Ligase</keyword>
<keyword id="KW-0547">Nucleotide-binding</keyword>
<keyword id="KW-0648">Protein biosynthesis</keyword>
<gene>
    <name evidence="1" type="primary">serS</name>
    <name type="ordered locus">Smal_2535</name>
</gene>
<accession>B4SP40</accession>